<protein>
    <recommendedName>
        <fullName evidence="1">Large ribosomal subunit protein bL33C</fullName>
    </recommendedName>
    <alternativeName>
        <fullName evidence="1">50S ribosomal protein L33 3</fullName>
    </alternativeName>
</protein>
<organism>
    <name type="scientific">Streptococcus pyogenes serotype M6 (strain ATCC BAA-946 / MGAS10394)</name>
    <dbReference type="NCBI Taxonomy" id="286636"/>
    <lineage>
        <taxon>Bacteria</taxon>
        <taxon>Bacillati</taxon>
        <taxon>Bacillota</taxon>
        <taxon>Bacilli</taxon>
        <taxon>Lactobacillales</taxon>
        <taxon>Streptococcaceae</taxon>
        <taxon>Streptococcus</taxon>
    </lineage>
</organism>
<dbReference type="EMBL" id="CP000003">
    <property type="protein sequence ID" value="AAT87970.1"/>
    <property type="molecule type" value="Genomic_DNA"/>
</dbReference>
<dbReference type="SMR" id="Q5X9E3"/>
<dbReference type="KEGG" id="spa:M6_Spy1835"/>
<dbReference type="HOGENOM" id="CLU_190949_3_2_9"/>
<dbReference type="Proteomes" id="UP000001167">
    <property type="component" value="Chromosome"/>
</dbReference>
<dbReference type="GO" id="GO:0005737">
    <property type="term" value="C:cytoplasm"/>
    <property type="evidence" value="ECO:0007669"/>
    <property type="project" value="UniProtKB-ARBA"/>
</dbReference>
<dbReference type="GO" id="GO:1990904">
    <property type="term" value="C:ribonucleoprotein complex"/>
    <property type="evidence" value="ECO:0007669"/>
    <property type="project" value="UniProtKB-KW"/>
</dbReference>
<dbReference type="GO" id="GO:0005840">
    <property type="term" value="C:ribosome"/>
    <property type="evidence" value="ECO:0007669"/>
    <property type="project" value="UniProtKB-KW"/>
</dbReference>
<dbReference type="GO" id="GO:0003735">
    <property type="term" value="F:structural constituent of ribosome"/>
    <property type="evidence" value="ECO:0007669"/>
    <property type="project" value="InterPro"/>
</dbReference>
<dbReference type="GO" id="GO:0006412">
    <property type="term" value="P:translation"/>
    <property type="evidence" value="ECO:0007669"/>
    <property type="project" value="UniProtKB-UniRule"/>
</dbReference>
<dbReference type="Gene3D" id="2.20.28.120">
    <property type="entry name" value="Ribosomal protein L33"/>
    <property type="match status" value="1"/>
</dbReference>
<dbReference type="HAMAP" id="MF_00294">
    <property type="entry name" value="Ribosomal_bL33"/>
    <property type="match status" value="1"/>
</dbReference>
<dbReference type="InterPro" id="IPR001705">
    <property type="entry name" value="Ribosomal_bL33"/>
</dbReference>
<dbReference type="InterPro" id="IPR018264">
    <property type="entry name" value="Ribosomal_bL33_CS"/>
</dbReference>
<dbReference type="InterPro" id="IPR038584">
    <property type="entry name" value="Ribosomal_bL33_sf"/>
</dbReference>
<dbReference type="InterPro" id="IPR011332">
    <property type="entry name" value="Ribosomal_zn-bd"/>
</dbReference>
<dbReference type="NCBIfam" id="NF001764">
    <property type="entry name" value="PRK00504.1"/>
    <property type="match status" value="1"/>
</dbReference>
<dbReference type="NCBIfam" id="NF001860">
    <property type="entry name" value="PRK00595.1"/>
    <property type="match status" value="1"/>
</dbReference>
<dbReference type="NCBIfam" id="TIGR01023">
    <property type="entry name" value="rpmG_bact"/>
    <property type="match status" value="1"/>
</dbReference>
<dbReference type="PANTHER" id="PTHR43168">
    <property type="entry name" value="50S RIBOSOMAL PROTEIN L33, CHLOROPLASTIC"/>
    <property type="match status" value="1"/>
</dbReference>
<dbReference type="PANTHER" id="PTHR43168:SF2">
    <property type="entry name" value="LARGE RIBOSOMAL SUBUNIT PROTEIN BL33C"/>
    <property type="match status" value="1"/>
</dbReference>
<dbReference type="Pfam" id="PF00471">
    <property type="entry name" value="Ribosomal_L33"/>
    <property type="match status" value="1"/>
</dbReference>
<dbReference type="SUPFAM" id="SSF57829">
    <property type="entry name" value="Zn-binding ribosomal proteins"/>
    <property type="match status" value="1"/>
</dbReference>
<dbReference type="PROSITE" id="PS00582">
    <property type="entry name" value="RIBOSOMAL_L33"/>
    <property type="match status" value="1"/>
</dbReference>
<feature type="chain" id="PRO_0000170252" description="Large ribosomal subunit protein bL33C">
    <location>
        <begin position="1"/>
        <end position="49"/>
    </location>
</feature>
<gene>
    <name evidence="1" type="primary">rpmG3</name>
    <name type="ordered locus">M6_Spy1835</name>
</gene>
<sequence>MRVNITLEHKESGERLYLTSKNKRNTPDRLQLKKYSPKLRKHVTFTEVK</sequence>
<proteinExistence type="inferred from homology"/>
<name>RL333_STRP6</name>
<keyword id="KW-0687">Ribonucleoprotein</keyword>
<keyword id="KW-0689">Ribosomal protein</keyword>
<evidence type="ECO:0000255" key="1">
    <source>
        <dbReference type="HAMAP-Rule" id="MF_00294"/>
    </source>
</evidence>
<comment type="similarity">
    <text evidence="1">Belongs to the bacterial ribosomal protein bL33 family.</text>
</comment>
<accession>Q5X9E3</accession>
<reference key="1">
    <citation type="journal article" date="2004" name="J. Infect. Dis.">
        <title>Progress toward characterization of the group A Streptococcus metagenome: complete genome sequence of a macrolide-resistant serotype M6 strain.</title>
        <authorList>
            <person name="Banks D.J."/>
            <person name="Porcella S.F."/>
            <person name="Barbian K.D."/>
            <person name="Beres S.B."/>
            <person name="Philips L.E."/>
            <person name="Voyich J.M."/>
            <person name="DeLeo F.R."/>
            <person name="Martin J.M."/>
            <person name="Somerville G.A."/>
            <person name="Musser J.M."/>
        </authorList>
    </citation>
    <scope>NUCLEOTIDE SEQUENCE [LARGE SCALE GENOMIC DNA]</scope>
    <source>
        <strain>ATCC BAA-946 / MGAS10394</strain>
    </source>
</reference>